<accession>A2ST53</accession>
<organism>
    <name type="scientific">Methanocorpusculum labreanum (strain ATCC 43576 / DSM 4855 / Z)</name>
    <dbReference type="NCBI Taxonomy" id="410358"/>
    <lineage>
        <taxon>Archaea</taxon>
        <taxon>Methanobacteriati</taxon>
        <taxon>Methanobacteriota</taxon>
        <taxon>Stenosarchaea group</taxon>
        <taxon>Methanomicrobia</taxon>
        <taxon>Methanomicrobiales</taxon>
        <taxon>Methanocorpusculaceae</taxon>
        <taxon>Methanocorpusculum</taxon>
    </lineage>
</organism>
<comment type="function">
    <text evidence="1">Part of ribonuclease P, a protein complex that generates mature tRNA molecules by cleaving their 5'-ends.</text>
</comment>
<comment type="catalytic activity">
    <reaction evidence="1">
        <text>Endonucleolytic cleavage of RNA, removing 5'-extranucleotides from tRNA precursor.</text>
        <dbReference type="EC" id="3.1.26.5"/>
    </reaction>
</comment>
<comment type="subunit">
    <text evidence="1">Consists of a catalytic RNA component and at least 4-5 protein subunits.</text>
</comment>
<comment type="subcellular location">
    <subcellularLocation>
        <location evidence="1">Cytoplasm</location>
    </subcellularLocation>
</comment>
<comment type="similarity">
    <text evidence="1">Belongs to the eukaryotic/archaeal RNase P protein component 2 family.</text>
</comment>
<sequence>MSVLPPTLRENRRYVLFRIITLVNPTQKEVYRSMADSVSALFGDAGAAKMHPAVVWSEGEYAIARCTRGYEQSLIAALAVVTKVCGEPASFRSLATSGTILSLKKKVIPESIDDTTYPGYLCAGKKVNNLSKENGHRYLTRDDIIKE</sequence>
<protein>
    <recommendedName>
        <fullName evidence="1">Ribonuclease P protein component 2</fullName>
        <shortName evidence="1">RNase P component 2</shortName>
        <ecNumber evidence="1">3.1.26.5</ecNumber>
    </recommendedName>
    <alternativeName>
        <fullName evidence="1">Pop5</fullName>
    </alternativeName>
</protein>
<proteinExistence type="inferred from homology"/>
<keyword id="KW-0963">Cytoplasm</keyword>
<keyword id="KW-0255">Endonuclease</keyword>
<keyword id="KW-0378">Hydrolase</keyword>
<keyword id="KW-0540">Nuclease</keyword>
<keyword id="KW-1185">Reference proteome</keyword>
<keyword id="KW-0819">tRNA processing</keyword>
<name>RNP2_METLZ</name>
<dbReference type="EC" id="3.1.26.5" evidence="1"/>
<dbReference type="EMBL" id="CP000559">
    <property type="protein sequence ID" value="ABN07509.1"/>
    <property type="molecule type" value="Genomic_DNA"/>
</dbReference>
<dbReference type="RefSeq" id="WP_011833712.1">
    <property type="nucleotide sequence ID" value="NC_008942.1"/>
</dbReference>
<dbReference type="SMR" id="A2ST53"/>
<dbReference type="STRING" id="410358.Mlab_1342"/>
<dbReference type="GeneID" id="4795369"/>
<dbReference type="KEGG" id="mla:Mlab_1342"/>
<dbReference type="eggNOG" id="arCOG01365">
    <property type="taxonomic scope" value="Archaea"/>
</dbReference>
<dbReference type="HOGENOM" id="CLU_137733_1_0_2"/>
<dbReference type="OrthoDB" id="19261at2157"/>
<dbReference type="Proteomes" id="UP000000365">
    <property type="component" value="Chromosome"/>
</dbReference>
<dbReference type="GO" id="GO:0005737">
    <property type="term" value="C:cytoplasm"/>
    <property type="evidence" value="ECO:0007669"/>
    <property type="project" value="UniProtKB-SubCell"/>
</dbReference>
<dbReference type="GO" id="GO:0030677">
    <property type="term" value="C:ribonuclease P complex"/>
    <property type="evidence" value="ECO:0007669"/>
    <property type="project" value="UniProtKB-UniRule"/>
</dbReference>
<dbReference type="GO" id="GO:0004526">
    <property type="term" value="F:ribonuclease P activity"/>
    <property type="evidence" value="ECO:0007669"/>
    <property type="project" value="UniProtKB-UniRule"/>
</dbReference>
<dbReference type="GO" id="GO:0001682">
    <property type="term" value="P:tRNA 5'-leader removal"/>
    <property type="evidence" value="ECO:0007669"/>
    <property type="project" value="UniProtKB-UniRule"/>
</dbReference>
<dbReference type="Gene3D" id="3.30.70.3250">
    <property type="entry name" value="Ribonuclease P, Pop5 subunit"/>
    <property type="match status" value="1"/>
</dbReference>
<dbReference type="HAMAP" id="MF_00755">
    <property type="entry name" value="RNase_P_2"/>
    <property type="match status" value="1"/>
</dbReference>
<dbReference type="InterPro" id="IPR002759">
    <property type="entry name" value="Pop5/Rpp14/Rnp2-like"/>
</dbReference>
<dbReference type="InterPro" id="IPR038085">
    <property type="entry name" value="Rnp2-like_sf"/>
</dbReference>
<dbReference type="PANTHER" id="PTHR15441">
    <property type="entry name" value="RIBONUCLEASE P PROTEIN SUBUNIT P14"/>
    <property type="match status" value="1"/>
</dbReference>
<dbReference type="PANTHER" id="PTHR15441:SF2">
    <property type="entry name" value="RIBONUCLEASE P_MRP PROTEIN SUBUNIT POP5"/>
    <property type="match status" value="1"/>
</dbReference>
<dbReference type="Pfam" id="PF01900">
    <property type="entry name" value="RNase_P_Rpp14"/>
    <property type="match status" value="1"/>
</dbReference>
<dbReference type="SUPFAM" id="SSF160350">
    <property type="entry name" value="Rnp2-like"/>
    <property type="match status" value="1"/>
</dbReference>
<reference key="1">
    <citation type="journal article" date="2009" name="Stand. Genomic Sci.">
        <title>Complete genome sequence of Methanocorpusculum labreanum type strain Z.</title>
        <authorList>
            <person name="Anderson I.J."/>
            <person name="Sieprawska-Lupa M."/>
            <person name="Goltsman E."/>
            <person name="Lapidus A."/>
            <person name="Copeland A."/>
            <person name="Glavina Del Rio T."/>
            <person name="Tice H."/>
            <person name="Dalin E."/>
            <person name="Barry K."/>
            <person name="Pitluck S."/>
            <person name="Hauser L."/>
            <person name="Land M."/>
            <person name="Lucas S."/>
            <person name="Richardson P."/>
            <person name="Whitman W.B."/>
            <person name="Kyrpides N.C."/>
        </authorList>
    </citation>
    <scope>NUCLEOTIDE SEQUENCE [LARGE SCALE GENOMIC DNA]</scope>
    <source>
        <strain>ATCC 43576 / DSM 4855 / Z</strain>
    </source>
</reference>
<gene>
    <name evidence="1" type="primary">rnp2</name>
    <name type="ordered locus">Mlab_1342</name>
</gene>
<evidence type="ECO:0000255" key="1">
    <source>
        <dbReference type="HAMAP-Rule" id="MF_00755"/>
    </source>
</evidence>
<feature type="chain" id="PRO_1000148366" description="Ribonuclease P protein component 2">
    <location>
        <begin position="1"/>
        <end position="147"/>
    </location>
</feature>